<feature type="chain" id="PRO_0000283370" description="Putative F-box protein At2g03610">
    <location>
        <begin position="1"/>
        <end position="216"/>
    </location>
</feature>
<feature type="domain" description="F-box">
    <location>
        <begin position="19"/>
        <end position="69"/>
    </location>
</feature>
<dbReference type="EMBL" id="AC006836">
    <property type="protein sequence ID" value="AAD20069.1"/>
    <property type="molecule type" value="Genomic_DNA"/>
</dbReference>
<dbReference type="EMBL" id="CP002685">
    <property type="protein sequence ID" value="AEC05724.1"/>
    <property type="molecule type" value="Genomic_DNA"/>
</dbReference>
<dbReference type="PIR" id="E84450">
    <property type="entry name" value="E84450"/>
</dbReference>
<dbReference type="RefSeq" id="NP_178459.1">
    <property type="nucleotide sequence ID" value="NM_126411.1"/>
</dbReference>
<dbReference type="FunCoup" id="Q9ZPR5">
    <property type="interactions" value="3"/>
</dbReference>
<dbReference type="PaxDb" id="3702-AT2G03610.1"/>
<dbReference type="EnsemblPlants" id="AT2G03610.1">
    <property type="protein sequence ID" value="AT2G03610.1"/>
    <property type="gene ID" value="AT2G03610"/>
</dbReference>
<dbReference type="GeneID" id="814890"/>
<dbReference type="Gramene" id="AT2G03610.1">
    <property type="protein sequence ID" value="AT2G03610.1"/>
    <property type="gene ID" value="AT2G03610"/>
</dbReference>
<dbReference type="KEGG" id="ath:AT2G03610"/>
<dbReference type="Araport" id="AT2G03610"/>
<dbReference type="TAIR" id="AT2G03610">
    <property type="gene designation" value="ATFDB8"/>
</dbReference>
<dbReference type="HOGENOM" id="CLU_091492_0_0_1"/>
<dbReference type="InParanoid" id="Q9ZPR5"/>
<dbReference type="OMA" id="NPYSNHP"/>
<dbReference type="OrthoDB" id="1020597at2759"/>
<dbReference type="PhylomeDB" id="Q9ZPR5"/>
<dbReference type="PRO" id="PR:Q9ZPR5"/>
<dbReference type="Proteomes" id="UP000006548">
    <property type="component" value="Chromosome 2"/>
</dbReference>
<dbReference type="ExpressionAtlas" id="Q9ZPR5">
    <property type="expression patterns" value="baseline and differential"/>
</dbReference>
<dbReference type="Gene3D" id="1.20.1280.50">
    <property type="match status" value="1"/>
</dbReference>
<dbReference type="InterPro" id="IPR036047">
    <property type="entry name" value="F-box-like_dom_sf"/>
</dbReference>
<dbReference type="InterPro" id="IPR050942">
    <property type="entry name" value="F-box_BR-signaling"/>
</dbReference>
<dbReference type="InterPro" id="IPR001810">
    <property type="entry name" value="F-box_dom"/>
</dbReference>
<dbReference type="InterPro" id="IPR005174">
    <property type="entry name" value="KIB1-4_b-propeller"/>
</dbReference>
<dbReference type="PANTHER" id="PTHR44259:SF98">
    <property type="entry name" value="GENOME ASSEMBLY, CHROMOSOME: A05"/>
    <property type="match status" value="1"/>
</dbReference>
<dbReference type="PANTHER" id="PTHR44259">
    <property type="entry name" value="OS07G0183000 PROTEIN-RELATED"/>
    <property type="match status" value="1"/>
</dbReference>
<dbReference type="Pfam" id="PF03478">
    <property type="entry name" value="Beta-prop_KIB1-4"/>
    <property type="match status" value="1"/>
</dbReference>
<dbReference type="Pfam" id="PF00646">
    <property type="entry name" value="F-box"/>
    <property type="match status" value="1"/>
</dbReference>
<dbReference type="SUPFAM" id="SSF81383">
    <property type="entry name" value="F-box domain"/>
    <property type="match status" value="1"/>
</dbReference>
<keyword id="KW-1185">Reference proteome</keyword>
<reference key="1">
    <citation type="journal article" date="1999" name="Nature">
        <title>Sequence and analysis of chromosome 2 of the plant Arabidopsis thaliana.</title>
        <authorList>
            <person name="Lin X."/>
            <person name="Kaul S."/>
            <person name="Rounsley S.D."/>
            <person name="Shea T.P."/>
            <person name="Benito M.-I."/>
            <person name="Town C.D."/>
            <person name="Fujii C.Y."/>
            <person name="Mason T.M."/>
            <person name="Bowman C.L."/>
            <person name="Barnstead M.E."/>
            <person name="Feldblyum T.V."/>
            <person name="Buell C.R."/>
            <person name="Ketchum K.A."/>
            <person name="Lee J.J."/>
            <person name="Ronning C.M."/>
            <person name="Koo H.L."/>
            <person name="Moffat K.S."/>
            <person name="Cronin L.A."/>
            <person name="Shen M."/>
            <person name="Pai G."/>
            <person name="Van Aken S."/>
            <person name="Umayam L."/>
            <person name="Tallon L.J."/>
            <person name="Gill J.E."/>
            <person name="Adams M.D."/>
            <person name="Carrera A.J."/>
            <person name="Creasy T.H."/>
            <person name="Goodman H.M."/>
            <person name="Somerville C.R."/>
            <person name="Copenhaver G.P."/>
            <person name="Preuss D."/>
            <person name="Nierman W.C."/>
            <person name="White O."/>
            <person name="Eisen J.A."/>
            <person name="Salzberg S.L."/>
            <person name="Fraser C.M."/>
            <person name="Venter J.C."/>
        </authorList>
    </citation>
    <scope>NUCLEOTIDE SEQUENCE [LARGE SCALE GENOMIC DNA]</scope>
    <source>
        <strain>cv. Columbia</strain>
    </source>
</reference>
<reference key="2">
    <citation type="journal article" date="2017" name="Plant J.">
        <title>Araport11: a complete reannotation of the Arabidopsis thaliana reference genome.</title>
        <authorList>
            <person name="Cheng C.Y."/>
            <person name="Krishnakumar V."/>
            <person name="Chan A.P."/>
            <person name="Thibaud-Nissen F."/>
            <person name="Schobel S."/>
            <person name="Town C.D."/>
        </authorList>
    </citation>
    <scope>GENOME REANNOTATION</scope>
    <source>
        <strain>cv. Columbia</strain>
    </source>
</reference>
<accession>Q9ZPR5</accession>
<organism>
    <name type="scientific">Arabidopsis thaliana</name>
    <name type="common">Mouse-ear cress</name>
    <dbReference type="NCBI Taxonomy" id="3702"/>
    <lineage>
        <taxon>Eukaryota</taxon>
        <taxon>Viridiplantae</taxon>
        <taxon>Streptophyta</taxon>
        <taxon>Embryophyta</taxon>
        <taxon>Tracheophyta</taxon>
        <taxon>Spermatophyta</taxon>
        <taxon>Magnoliopsida</taxon>
        <taxon>eudicotyledons</taxon>
        <taxon>Gunneridae</taxon>
        <taxon>Pentapetalae</taxon>
        <taxon>rosids</taxon>
        <taxon>malvids</taxon>
        <taxon>Brassicales</taxon>
        <taxon>Brassicaceae</taxon>
        <taxon>Camelineae</taxon>
        <taxon>Arabidopsis</taxon>
    </lineage>
</organism>
<gene>
    <name type="ordered locus">At2g03610</name>
    <name type="ORF">F19B11.6</name>
</gene>
<name>FB97_ARATH</name>
<sequence>METPNDLVKEEKRQGASENQDWSKLCPDLLRPILESLSSIDFHRAKTVCSDWYSVWKTCKGYDSKWNQNSGSIFDMAYKNSKLYLYTLDHHIKIYDFSGDSPKEEGLTNPYSNHPFRFDEKPQEYIWKRKIVIAESGEMMNEMLIFGHGVTMRAQVHDVGDGIKRDSICFVEDDLWPDFDRPSNCGIFNLATSRITWPKRYGVYIDQKQWFLPGFA</sequence>
<protein>
    <recommendedName>
        <fullName>Putative F-box protein At2g03610</fullName>
    </recommendedName>
</protein>
<proteinExistence type="predicted"/>